<sequence length="200" mass="22643">MKLKSIMSQCQFIIGATSIKSLPDFSIPEVALAGRSNVGKSSLINAITNNRKNARISSKPGCTRQINFYLINKGLMVLVDLPGYGYSKADRATVNSYICLMEYYLLNRKNLSKVVLLIDAKVGFKEIDLDFIRWLEVHQILYQLVLTKIDRVQSNVLDVIVSDVQNFNLNFIIYPIINVSSKCKQGIEELIYEIAQCIKK</sequence>
<reference key="1">
    <citation type="journal article" date="2006" name="J. Bacteriol.">
        <title>Comparative genomic analysis of three strains of Ehrlichia ruminantium reveals an active process of genome size plasticity.</title>
        <authorList>
            <person name="Frutos R."/>
            <person name="Viari A."/>
            <person name="Ferraz C."/>
            <person name="Morgat A."/>
            <person name="Eychenie S."/>
            <person name="Kandassamy Y."/>
            <person name="Chantal I."/>
            <person name="Bensaid A."/>
            <person name="Coissac E."/>
            <person name="Vachiery N."/>
            <person name="Demaille J."/>
            <person name="Martinez D."/>
        </authorList>
    </citation>
    <scope>NUCLEOTIDE SEQUENCE [LARGE SCALE GENOMIC DNA]</scope>
    <source>
        <strain>Gardel</strain>
    </source>
</reference>
<comment type="function">
    <text evidence="1">Necessary for normal cell division and for the maintenance of normal septation.</text>
</comment>
<comment type="cofactor">
    <cofactor evidence="1">
        <name>Mg(2+)</name>
        <dbReference type="ChEBI" id="CHEBI:18420"/>
    </cofactor>
</comment>
<comment type="similarity">
    <text evidence="1">Belongs to the TRAFAC class TrmE-Era-EngA-EngB-Septin-like GTPase superfamily. EngB GTPase family.</text>
</comment>
<proteinExistence type="inferred from homology"/>
<gene>
    <name evidence="1" type="primary">engB</name>
    <name type="ordered locus">ERGA_CDS_04610</name>
</gene>
<accession>Q5FGZ3</accession>
<feature type="chain" id="PRO_0000266856" description="Probable GTP-binding protein EngB">
    <location>
        <begin position="1"/>
        <end position="200"/>
    </location>
</feature>
<feature type="domain" description="EngB-type G" evidence="1">
    <location>
        <begin position="26"/>
        <end position="200"/>
    </location>
</feature>
<feature type="binding site" evidence="1">
    <location>
        <begin position="34"/>
        <end position="41"/>
    </location>
    <ligand>
        <name>GTP</name>
        <dbReference type="ChEBI" id="CHEBI:37565"/>
    </ligand>
</feature>
<feature type="binding site" evidence="1">
    <location>
        <position position="41"/>
    </location>
    <ligand>
        <name>Mg(2+)</name>
        <dbReference type="ChEBI" id="CHEBI:18420"/>
    </ligand>
</feature>
<feature type="binding site" evidence="1">
    <location>
        <begin position="61"/>
        <end position="65"/>
    </location>
    <ligand>
        <name>GTP</name>
        <dbReference type="ChEBI" id="CHEBI:37565"/>
    </ligand>
</feature>
<feature type="binding site" evidence="1">
    <location>
        <position position="63"/>
    </location>
    <ligand>
        <name>Mg(2+)</name>
        <dbReference type="ChEBI" id="CHEBI:18420"/>
    </ligand>
</feature>
<feature type="binding site" evidence="1">
    <location>
        <begin position="80"/>
        <end position="83"/>
    </location>
    <ligand>
        <name>GTP</name>
        <dbReference type="ChEBI" id="CHEBI:37565"/>
    </ligand>
</feature>
<feature type="binding site" evidence="1">
    <location>
        <begin position="147"/>
        <end position="150"/>
    </location>
    <ligand>
        <name>GTP</name>
        <dbReference type="ChEBI" id="CHEBI:37565"/>
    </ligand>
</feature>
<feature type="binding site" evidence="1">
    <location>
        <begin position="179"/>
        <end position="181"/>
    </location>
    <ligand>
        <name>GTP</name>
        <dbReference type="ChEBI" id="CHEBI:37565"/>
    </ligand>
</feature>
<name>ENGB_EHRRG</name>
<organism>
    <name type="scientific">Ehrlichia ruminantium (strain Gardel)</name>
    <dbReference type="NCBI Taxonomy" id="302409"/>
    <lineage>
        <taxon>Bacteria</taxon>
        <taxon>Pseudomonadati</taxon>
        <taxon>Pseudomonadota</taxon>
        <taxon>Alphaproteobacteria</taxon>
        <taxon>Rickettsiales</taxon>
        <taxon>Anaplasmataceae</taxon>
        <taxon>Ehrlichia</taxon>
    </lineage>
</organism>
<keyword id="KW-0131">Cell cycle</keyword>
<keyword id="KW-0132">Cell division</keyword>
<keyword id="KW-0342">GTP-binding</keyword>
<keyword id="KW-0460">Magnesium</keyword>
<keyword id="KW-0479">Metal-binding</keyword>
<keyword id="KW-0547">Nucleotide-binding</keyword>
<keyword id="KW-0717">Septation</keyword>
<evidence type="ECO:0000255" key="1">
    <source>
        <dbReference type="HAMAP-Rule" id="MF_00321"/>
    </source>
</evidence>
<dbReference type="EMBL" id="CR925677">
    <property type="protein sequence ID" value="CAI27913.1"/>
    <property type="molecule type" value="Genomic_DNA"/>
</dbReference>
<dbReference type="RefSeq" id="WP_011255589.1">
    <property type="nucleotide sequence ID" value="NC_006831.1"/>
</dbReference>
<dbReference type="SMR" id="Q5FGZ3"/>
<dbReference type="KEGG" id="erg:ERGA_CDS_04610"/>
<dbReference type="HOGENOM" id="CLU_033732_2_0_5"/>
<dbReference type="OrthoDB" id="9804921at2"/>
<dbReference type="Proteomes" id="UP000000533">
    <property type="component" value="Chromosome"/>
</dbReference>
<dbReference type="GO" id="GO:0005525">
    <property type="term" value="F:GTP binding"/>
    <property type="evidence" value="ECO:0007669"/>
    <property type="project" value="UniProtKB-UniRule"/>
</dbReference>
<dbReference type="GO" id="GO:0046872">
    <property type="term" value="F:metal ion binding"/>
    <property type="evidence" value="ECO:0007669"/>
    <property type="project" value="UniProtKB-KW"/>
</dbReference>
<dbReference type="GO" id="GO:0000917">
    <property type="term" value="P:division septum assembly"/>
    <property type="evidence" value="ECO:0007669"/>
    <property type="project" value="UniProtKB-KW"/>
</dbReference>
<dbReference type="CDD" id="cd01876">
    <property type="entry name" value="YihA_EngB"/>
    <property type="match status" value="1"/>
</dbReference>
<dbReference type="Gene3D" id="3.40.50.300">
    <property type="entry name" value="P-loop containing nucleotide triphosphate hydrolases"/>
    <property type="match status" value="1"/>
</dbReference>
<dbReference type="HAMAP" id="MF_00321">
    <property type="entry name" value="GTPase_EngB"/>
    <property type="match status" value="1"/>
</dbReference>
<dbReference type="InterPro" id="IPR030393">
    <property type="entry name" value="G_ENGB_dom"/>
</dbReference>
<dbReference type="InterPro" id="IPR006073">
    <property type="entry name" value="GTP-bd"/>
</dbReference>
<dbReference type="InterPro" id="IPR019987">
    <property type="entry name" value="GTP-bd_ribosome_bio_YsxC"/>
</dbReference>
<dbReference type="InterPro" id="IPR027417">
    <property type="entry name" value="P-loop_NTPase"/>
</dbReference>
<dbReference type="NCBIfam" id="TIGR03598">
    <property type="entry name" value="GTPase_YsxC"/>
    <property type="match status" value="1"/>
</dbReference>
<dbReference type="PANTHER" id="PTHR11649:SF13">
    <property type="entry name" value="ENGB-TYPE G DOMAIN-CONTAINING PROTEIN"/>
    <property type="match status" value="1"/>
</dbReference>
<dbReference type="PANTHER" id="PTHR11649">
    <property type="entry name" value="MSS1/TRME-RELATED GTP-BINDING PROTEIN"/>
    <property type="match status" value="1"/>
</dbReference>
<dbReference type="Pfam" id="PF01926">
    <property type="entry name" value="MMR_HSR1"/>
    <property type="match status" value="1"/>
</dbReference>
<dbReference type="SUPFAM" id="SSF52540">
    <property type="entry name" value="P-loop containing nucleoside triphosphate hydrolases"/>
    <property type="match status" value="1"/>
</dbReference>
<dbReference type="PROSITE" id="PS51706">
    <property type="entry name" value="G_ENGB"/>
    <property type="match status" value="1"/>
</dbReference>
<protein>
    <recommendedName>
        <fullName evidence="1">Probable GTP-binding protein EngB</fullName>
    </recommendedName>
</protein>